<name>GLMM_STAA9</name>
<proteinExistence type="inferred from homology"/>
<dbReference type="EC" id="5.4.2.10" evidence="1"/>
<dbReference type="EMBL" id="CP000703">
    <property type="protein sequence ID" value="ABQ49974.1"/>
    <property type="molecule type" value="Genomic_DNA"/>
</dbReference>
<dbReference type="RefSeq" id="WP_000521495.1">
    <property type="nucleotide sequence ID" value="NC_009487.1"/>
</dbReference>
<dbReference type="SMR" id="A5IUV1"/>
<dbReference type="KEGG" id="saj:SaurJH9_2193"/>
<dbReference type="HOGENOM" id="CLU_016950_7_0_9"/>
<dbReference type="GO" id="GO:0005829">
    <property type="term" value="C:cytosol"/>
    <property type="evidence" value="ECO:0007669"/>
    <property type="project" value="TreeGrafter"/>
</dbReference>
<dbReference type="GO" id="GO:0000287">
    <property type="term" value="F:magnesium ion binding"/>
    <property type="evidence" value="ECO:0007669"/>
    <property type="project" value="UniProtKB-UniRule"/>
</dbReference>
<dbReference type="GO" id="GO:0008966">
    <property type="term" value="F:phosphoglucosamine mutase activity"/>
    <property type="evidence" value="ECO:0007669"/>
    <property type="project" value="UniProtKB-UniRule"/>
</dbReference>
<dbReference type="GO" id="GO:0004615">
    <property type="term" value="F:phosphomannomutase activity"/>
    <property type="evidence" value="ECO:0007669"/>
    <property type="project" value="TreeGrafter"/>
</dbReference>
<dbReference type="GO" id="GO:0005975">
    <property type="term" value="P:carbohydrate metabolic process"/>
    <property type="evidence" value="ECO:0007669"/>
    <property type="project" value="InterPro"/>
</dbReference>
<dbReference type="GO" id="GO:0009252">
    <property type="term" value="P:peptidoglycan biosynthetic process"/>
    <property type="evidence" value="ECO:0007669"/>
    <property type="project" value="TreeGrafter"/>
</dbReference>
<dbReference type="GO" id="GO:0006048">
    <property type="term" value="P:UDP-N-acetylglucosamine biosynthetic process"/>
    <property type="evidence" value="ECO:0007669"/>
    <property type="project" value="TreeGrafter"/>
</dbReference>
<dbReference type="CDD" id="cd05802">
    <property type="entry name" value="GlmM"/>
    <property type="match status" value="1"/>
</dbReference>
<dbReference type="FunFam" id="3.30.310.50:FF:000001">
    <property type="entry name" value="Phosphoglucosamine mutase"/>
    <property type="match status" value="1"/>
</dbReference>
<dbReference type="FunFam" id="3.40.120.10:FF:000001">
    <property type="entry name" value="Phosphoglucosamine mutase"/>
    <property type="match status" value="1"/>
</dbReference>
<dbReference type="FunFam" id="3.40.120.10:FF:000002">
    <property type="entry name" value="Phosphoglucosamine mutase"/>
    <property type="match status" value="1"/>
</dbReference>
<dbReference type="Gene3D" id="3.40.120.10">
    <property type="entry name" value="Alpha-D-Glucose-1,6-Bisphosphate, subunit A, domain 3"/>
    <property type="match status" value="3"/>
</dbReference>
<dbReference type="Gene3D" id="3.30.310.50">
    <property type="entry name" value="Alpha-D-phosphohexomutase, C-terminal domain"/>
    <property type="match status" value="1"/>
</dbReference>
<dbReference type="HAMAP" id="MF_01554_B">
    <property type="entry name" value="GlmM_B"/>
    <property type="match status" value="1"/>
</dbReference>
<dbReference type="InterPro" id="IPR005844">
    <property type="entry name" value="A-D-PHexomutase_a/b/a-I"/>
</dbReference>
<dbReference type="InterPro" id="IPR016055">
    <property type="entry name" value="A-D-PHexomutase_a/b/a-I/II/III"/>
</dbReference>
<dbReference type="InterPro" id="IPR005845">
    <property type="entry name" value="A-D-PHexomutase_a/b/a-II"/>
</dbReference>
<dbReference type="InterPro" id="IPR005846">
    <property type="entry name" value="A-D-PHexomutase_a/b/a-III"/>
</dbReference>
<dbReference type="InterPro" id="IPR005843">
    <property type="entry name" value="A-D-PHexomutase_C"/>
</dbReference>
<dbReference type="InterPro" id="IPR036900">
    <property type="entry name" value="A-D-PHexomutase_C_sf"/>
</dbReference>
<dbReference type="InterPro" id="IPR016066">
    <property type="entry name" value="A-D-PHexomutase_CS"/>
</dbReference>
<dbReference type="InterPro" id="IPR005841">
    <property type="entry name" value="Alpha-D-phosphohexomutase_SF"/>
</dbReference>
<dbReference type="InterPro" id="IPR006352">
    <property type="entry name" value="GlmM_bact"/>
</dbReference>
<dbReference type="InterPro" id="IPR050060">
    <property type="entry name" value="Phosphoglucosamine_mutase"/>
</dbReference>
<dbReference type="NCBIfam" id="TIGR01455">
    <property type="entry name" value="glmM"/>
    <property type="match status" value="1"/>
</dbReference>
<dbReference type="NCBIfam" id="NF008139">
    <property type="entry name" value="PRK10887.1"/>
    <property type="match status" value="1"/>
</dbReference>
<dbReference type="PANTHER" id="PTHR42946:SF1">
    <property type="entry name" value="PHOSPHOGLUCOMUTASE (ALPHA-D-GLUCOSE-1,6-BISPHOSPHATE-DEPENDENT)"/>
    <property type="match status" value="1"/>
</dbReference>
<dbReference type="PANTHER" id="PTHR42946">
    <property type="entry name" value="PHOSPHOHEXOSE MUTASE"/>
    <property type="match status" value="1"/>
</dbReference>
<dbReference type="Pfam" id="PF02878">
    <property type="entry name" value="PGM_PMM_I"/>
    <property type="match status" value="1"/>
</dbReference>
<dbReference type="Pfam" id="PF02879">
    <property type="entry name" value="PGM_PMM_II"/>
    <property type="match status" value="1"/>
</dbReference>
<dbReference type="Pfam" id="PF02880">
    <property type="entry name" value="PGM_PMM_III"/>
    <property type="match status" value="1"/>
</dbReference>
<dbReference type="Pfam" id="PF00408">
    <property type="entry name" value="PGM_PMM_IV"/>
    <property type="match status" value="1"/>
</dbReference>
<dbReference type="PRINTS" id="PR00509">
    <property type="entry name" value="PGMPMM"/>
</dbReference>
<dbReference type="SUPFAM" id="SSF55957">
    <property type="entry name" value="Phosphoglucomutase, C-terminal domain"/>
    <property type="match status" value="1"/>
</dbReference>
<dbReference type="SUPFAM" id="SSF53738">
    <property type="entry name" value="Phosphoglucomutase, first 3 domains"/>
    <property type="match status" value="3"/>
</dbReference>
<dbReference type="PROSITE" id="PS00710">
    <property type="entry name" value="PGM_PMM"/>
    <property type="match status" value="1"/>
</dbReference>
<gene>
    <name evidence="1" type="primary">glmM</name>
    <name type="ordered locus">SaurJH9_2193</name>
</gene>
<protein>
    <recommendedName>
        <fullName evidence="1">Phosphoglucosamine mutase</fullName>
        <ecNumber evidence="1">5.4.2.10</ecNumber>
    </recommendedName>
</protein>
<evidence type="ECO:0000255" key="1">
    <source>
        <dbReference type="HAMAP-Rule" id="MF_01554"/>
    </source>
</evidence>
<sequence>MGKYFGTDGVRGVANQELTPELAFKLGRYGGYVLAHNKGEKHPRVLVGRDTRVSGEMLESALIAGLISIGAEVMRLGIISTPGVAYLTRDMGAELGVMISASHNPVADNGIKFFGSDGFKLSDEQENEIEALLDQENPELPRPVGNDIVHYSDYFEGAQKYLSYLKSTVDVNFEGLKIVLDGANGSTSSLAPFLFGDLEADTETIGCSPDGYNINEKCGSTHPEKLAEKVVETESDFGLAFDGDGDRIIAVDENGQIVDGDQIMFIIGQEMHKNQELNNDMIVSTVMSNLGFYKALEQEGIKSNKTKVGDRYVVEEMRRGNYNLGGEQSGHIVMMDYNTTGDGLLTGIQLASVIKMTGKSLSELAGQMKKYPQSLINVRVTDKYRVEENVDVKEVMTKVEVEMNGEGRILVRPSGTEPLVRVMVEAATDEDAERFAQQIADVVQDKMGLDK</sequence>
<feature type="chain" id="PRO_1000087781" description="Phosphoglucosamine mutase">
    <location>
        <begin position="1"/>
        <end position="451"/>
    </location>
</feature>
<feature type="active site" description="Phosphoserine intermediate" evidence="1">
    <location>
        <position position="102"/>
    </location>
</feature>
<feature type="binding site" description="via phosphate group" evidence="1">
    <location>
        <position position="102"/>
    </location>
    <ligand>
        <name>Mg(2+)</name>
        <dbReference type="ChEBI" id="CHEBI:18420"/>
    </ligand>
</feature>
<feature type="binding site" evidence="1">
    <location>
        <position position="242"/>
    </location>
    <ligand>
        <name>Mg(2+)</name>
        <dbReference type="ChEBI" id="CHEBI:18420"/>
    </ligand>
</feature>
<feature type="binding site" evidence="1">
    <location>
        <position position="244"/>
    </location>
    <ligand>
        <name>Mg(2+)</name>
        <dbReference type="ChEBI" id="CHEBI:18420"/>
    </ligand>
</feature>
<feature type="binding site" evidence="1">
    <location>
        <position position="246"/>
    </location>
    <ligand>
        <name>Mg(2+)</name>
        <dbReference type="ChEBI" id="CHEBI:18420"/>
    </ligand>
</feature>
<feature type="modified residue" description="Phosphoserine" evidence="1">
    <location>
        <position position="102"/>
    </location>
</feature>
<organism>
    <name type="scientific">Staphylococcus aureus (strain JH9)</name>
    <dbReference type="NCBI Taxonomy" id="359786"/>
    <lineage>
        <taxon>Bacteria</taxon>
        <taxon>Bacillati</taxon>
        <taxon>Bacillota</taxon>
        <taxon>Bacilli</taxon>
        <taxon>Bacillales</taxon>
        <taxon>Staphylococcaceae</taxon>
        <taxon>Staphylococcus</taxon>
    </lineage>
</organism>
<keyword id="KW-0413">Isomerase</keyword>
<keyword id="KW-0460">Magnesium</keyword>
<keyword id="KW-0479">Metal-binding</keyword>
<keyword id="KW-0597">Phosphoprotein</keyword>
<accession>A5IUV1</accession>
<comment type="function">
    <text evidence="1">Catalyzes the conversion of glucosamine-6-phosphate to glucosamine-1-phosphate.</text>
</comment>
<comment type="catalytic activity">
    <reaction evidence="1">
        <text>alpha-D-glucosamine 1-phosphate = D-glucosamine 6-phosphate</text>
        <dbReference type="Rhea" id="RHEA:23424"/>
        <dbReference type="ChEBI" id="CHEBI:58516"/>
        <dbReference type="ChEBI" id="CHEBI:58725"/>
        <dbReference type="EC" id="5.4.2.10"/>
    </reaction>
</comment>
<comment type="cofactor">
    <cofactor evidence="1">
        <name>Mg(2+)</name>
        <dbReference type="ChEBI" id="CHEBI:18420"/>
    </cofactor>
    <text evidence="1">Binds 1 Mg(2+) ion per subunit.</text>
</comment>
<comment type="PTM">
    <text evidence="1">Activated by phosphorylation.</text>
</comment>
<comment type="similarity">
    <text evidence="1">Belongs to the phosphohexose mutase family.</text>
</comment>
<reference key="1">
    <citation type="submission" date="2007-05" db="EMBL/GenBank/DDBJ databases">
        <title>Complete sequence of chromosome of Staphylococcus aureus subsp. aureus JH9.</title>
        <authorList>
            <consortium name="US DOE Joint Genome Institute"/>
            <person name="Copeland A."/>
            <person name="Lucas S."/>
            <person name="Lapidus A."/>
            <person name="Barry K."/>
            <person name="Detter J.C."/>
            <person name="Glavina del Rio T."/>
            <person name="Hammon N."/>
            <person name="Israni S."/>
            <person name="Pitluck S."/>
            <person name="Chain P."/>
            <person name="Malfatti S."/>
            <person name="Shin M."/>
            <person name="Vergez L."/>
            <person name="Schmutz J."/>
            <person name="Larimer F."/>
            <person name="Land M."/>
            <person name="Hauser L."/>
            <person name="Kyrpides N."/>
            <person name="Kim E."/>
            <person name="Tomasz A."/>
            <person name="Richardson P."/>
        </authorList>
    </citation>
    <scope>NUCLEOTIDE SEQUENCE [LARGE SCALE GENOMIC DNA]</scope>
    <source>
        <strain>JH9</strain>
    </source>
</reference>